<dbReference type="EMBL" id="CP000887">
    <property type="protein sequence ID" value="ACD73093.1"/>
    <property type="molecule type" value="Genomic_DNA"/>
</dbReference>
<dbReference type="RefSeq" id="WP_002964799.1">
    <property type="nucleotide sequence ID" value="NC_010742.1"/>
</dbReference>
<dbReference type="SMR" id="B2S7E6"/>
<dbReference type="GeneID" id="93017928"/>
<dbReference type="KEGG" id="bmc:BAbS19_I16090"/>
<dbReference type="HOGENOM" id="CLU_074944_1_1_5"/>
<dbReference type="UniPathway" id="UPA00345"/>
<dbReference type="Proteomes" id="UP000002565">
    <property type="component" value="Chromosome 1"/>
</dbReference>
<dbReference type="GO" id="GO:0005737">
    <property type="term" value="C:cytoplasm"/>
    <property type="evidence" value="ECO:0007669"/>
    <property type="project" value="UniProtKB-SubCell"/>
</dbReference>
<dbReference type="GO" id="GO:0003746">
    <property type="term" value="F:translation elongation factor activity"/>
    <property type="evidence" value="ECO:0007669"/>
    <property type="project" value="UniProtKB-UniRule"/>
</dbReference>
<dbReference type="GO" id="GO:0043043">
    <property type="term" value="P:peptide biosynthetic process"/>
    <property type="evidence" value="ECO:0007669"/>
    <property type="project" value="InterPro"/>
</dbReference>
<dbReference type="CDD" id="cd04470">
    <property type="entry name" value="S1_EF-P_repeat_1"/>
    <property type="match status" value="1"/>
</dbReference>
<dbReference type="CDD" id="cd05794">
    <property type="entry name" value="S1_EF-P_repeat_2"/>
    <property type="match status" value="1"/>
</dbReference>
<dbReference type="FunFam" id="2.30.30.30:FF:000003">
    <property type="entry name" value="Elongation factor P"/>
    <property type="match status" value="1"/>
</dbReference>
<dbReference type="FunFam" id="2.40.50.140:FF:000004">
    <property type="entry name" value="Elongation factor P"/>
    <property type="match status" value="1"/>
</dbReference>
<dbReference type="FunFam" id="2.40.50.140:FF:000009">
    <property type="entry name" value="Elongation factor P"/>
    <property type="match status" value="1"/>
</dbReference>
<dbReference type="Gene3D" id="2.30.30.30">
    <property type="match status" value="1"/>
</dbReference>
<dbReference type="Gene3D" id="2.40.50.140">
    <property type="entry name" value="Nucleic acid-binding proteins"/>
    <property type="match status" value="2"/>
</dbReference>
<dbReference type="HAMAP" id="MF_00141">
    <property type="entry name" value="EF_P"/>
    <property type="match status" value="1"/>
</dbReference>
<dbReference type="InterPro" id="IPR015365">
    <property type="entry name" value="Elong-fact-P_C"/>
</dbReference>
<dbReference type="InterPro" id="IPR012340">
    <property type="entry name" value="NA-bd_OB-fold"/>
</dbReference>
<dbReference type="InterPro" id="IPR014722">
    <property type="entry name" value="Rib_uL2_dom2"/>
</dbReference>
<dbReference type="InterPro" id="IPR020599">
    <property type="entry name" value="Transl_elong_fac_P/YeiP"/>
</dbReference>
<dbReference type="InterPro" id="IPR013185">
    <property type="entry name" value="Transl_elong_KOW-like"/>
</dbReference>
<dbReference type="InterPro" id="IPR001059">
    <property type="entry name" value="Transl_elong_P/YeiP_cen"/>
</dbReference>
<dbReference type="InterPro" id="IPR013852">
    <property type="entry name" value="Transl_elong_P/YeiP_CS"/>
</dbReference>
<dbReference type="InterPro" id="IPR011768">
    <property type="entry name" value="Transl_elongation_fac_P"/>
</dbReference>
<dbReference type="InterPro" id="IPR008991">
    <property type="entry name" value="Translation_prot_SH3-like_sf"/>
</dbReference>
<dbReference type="NCBIfam" id="TIGR00038">
    <property type="entry name" value="efp"/>
    <property type="match status" value="1"/>
</dbReference>
<dbReference type="NCBIfam" id="NF001810">
    <property type="entry name" value="PRK00529.1"/>
    <property type="match status" value="1"/>
</dbReference>
<dbReference type="PANTHER" id="PTHR30053">
    <property type="entry name" value="ELONGATION FACTOR P"/>
    <property type="match status" value="1"/>
</dbReference>
<dbReference type="PANTHER" id="PTHR30053:SF14">
    <property type="entry name" value="TRANSLATION ELONGATION FACTOR KOW-LIKE DOMAIN-CONTAINING PROTEIN"/>
    <property type="match status" value="1"/>
</dbReference>
<dbReference type="Pfam" id="PF01132">
    <property type="entry name" value="EFP"/>
    <property type="match status" value="1"/>
</dbReference>
<dbReference type="Pfam" id="PF08207">
    <property type="entry name" value="EFP_N"/>
    <property type="match status" value="1"/>
</dbReference>
<dbReference type="Pfam" id="PF09285">
    <property type="entry name" value="Elong-fact-P_C"/>
    <property type="match status" value="1"/>
</dbReference>
<dbReference type="PIRSF" id="PIRSF005901">
    <property type="entry name" value="EF-P"/>
    <property type="match status" value="1"/>
</dbReference>
<dbReference type="SMART" id="SM01185">
    <property type="entry name" value="EFP"/>
    <property type="match status" value="1"/>
</dbReference>
<dbReference type="SMART" id="SM00841">
    <property type="entry name" value="Elong-fact-P_C"/>
    <property type="match status" value="1"/>
</dbReference>
<dbReference type="SUPFAM" id="SSF50249">
    <property type="entry name" value="Nucleic acid-binding proteins"/>
    <property type="match status" value="2"/>
</dbReference>
<dbReference type="SUPFAM" id="SSF50104">
    <property type="entry name" value="Translation proteins SH3-like domain"/>
    <property type="match status" value="1"/>
</dbReference>
<dbReference type="PROSITE" id="PS01275">
    <property type="entry name" value="EFP"/>
    <property type="match status" value="1"/>
</dbReference>
<accession>B2S7E6</accession>
<protein>
    <recommendedName>
        <fullName evidence="1">Elongation factor P</fullName>
        <shortName evidence="1">EF-P</shortName>
    </recommendedName>
</protein>
<reference key="1">
    <citation type="journal article" date="2008" name="PLoS ONE">
        <title>Genome sequence of Brucella abortus vaccine strain S19 compared to virulent strains yields candidate virulence genes.</title>
        <authorList>
            <person name="Crasta O.R."/>
            <person name="Folkerts O."/>
            <person name="Fei Z."/>
            <person name="Mane S.P."/>
            <person name="Evans C."/>
            <person name="Martino-Catt S."/>
            <person name="Bricker B."/>
            <person name="Yu G."/>
            <person name="Du L."/>
            <person name="Sobral B.W."/>
        </authorList>
    </citation>
    <scope>NUCLEOTIDE SEQUENCE [LARGE SCALE GENOMIC DNA]</scope>
    <source>
        <strain>S19</strain>
    </source>
</reference>
<proteinExistence type="inferred from homology"/>
<sequence length="186" mass="20700">MKINGNEIRPGNVIEHEGGLWVAVKTNAVKPGKGGAYNQVELKNLINGTKLNERFRAAESVERVRLEQKDFSFLYEQGEALIFMDTETYEQLELQKDFVGDRAAFLQDGMMVTVELYEEKPIGIRLPDQVTLAITEADPVVKGQTAASSYKPAVLENGIRIPVPPFIASGERVIVDTNELTYISRA</sequence>
<gene>
    <name evidence="1" type="primary">efp</name>
    <name type="ordered locus">BAbS19_I16090</name>
</gene>
<organism>
    <name type="scientific">Brucella abortus (strain S19)</name>
    <dbReference type="NCBI Taxonomy" id="430066"/>
    <lineage>
        <taxon>Bacteria</taxon>
        <taxon>Pseudomonadati</taxon>
        <taxon>Pseudomonadota</taxon>
        <taxon>Alphaproteobacteria</taxon>
        <taxon>Hyphomicrobiales</taxon>
        <taxon>Brucellaceae</taxon>
        <taxon>Brucella/Ochrobactrum group</taxon>
        <taxon>Brucella</taxon>
    </lineage>
</organism>
<name>EFP_BRUA1</name>
<keyword id="KW-0963">Cytoplasm</keyword>
<keyword id="KW-0251">Elongation factor</keyword>
<keyword id="KW-0648">Protein biosynthesis</keyword>
<comment type="function">
    <text evidence="1">Involved in peptide bond synthesis. Stimulates efficient translation and peptide-bond synthesis on native or reconstituted 70S ribosomes in vitro. Probably functions indirectly by altering the affinity of the ribosome for aminoacyl-tRNA, thus increasing their reactivity as acceptors for peptidyl transferase.</text>
</comment>
<comment type="pathway">
    <text evidence="1">Protein biosynthesis; polypeptide chain elongation.</text>
</comment>
<comment type="subcellular location">
    <subcellularLocation>
        <location evidence="1">Cytoplasm</location>
    </subcellularLocation>
</comment>
<comment type="similarity">
    <text evidence="1">Belongs to the elongation factor P family.</text>
</comment>
<feature type="chain" id="PRO_1000096127" description="Elongation factor P">
    <location>
        <begin position="1"/>
        <end position="186"/>
    </location>
</feature>
<evidence type="ECO:0000255" key="1">
    <source>
        <dbReference type="HAMAP-Rule" id="MF_00141"/>
    </source>
</evidence>